<protein>
    <recommendedName>
        <fullName evidence="1">Peptidyl-tRNA hydrolase</fullName>
        <shortName evidence="1">Pth</shortName>
        <ecNumber evidence="1">3.1.1.29</ecNumber>
    </recommendedName>
</protein>
<proteinExistence type="inferred from homology"/>
<dbReference type="EC" id="3.1.1.29" evidence="1"/>
<dbReference type="EMBL" id="AE017340">
    <property type="protein sequence ID" value="AAV81771.1"/>
    <property type="molecule type" value="Genomic_DNA"/>
</dbReference>
<dbReference type="RefSeq" id="WP_011234182.1">
    <property type="nucleotide sequence ID" value="NC_006512.1"/>
</dbReference>
<dbReference type="SMR" id="Q5QV03"/>
<dbReference type="STRING" id="283942.IL0931"/>
<dbReference type="GeneID" id="41336086"/>
<dbReference type="KEGG" id="ilo:IL0931"/>
<dbReference type="eggNOG" id="COG0193">
    <property type="taxonomic scope" value="Bacteria"/>
</dbReference>
<dbReference type="HOGENOM" id="CLU_062456_3_1_6"/>
<dbReference type="OrthoDB" id="9800507at2"/>
<dbReference type="Proteomes" id="UP000001171">
    <property type="component" value="Chromosome"/>
</dbReference>
<dbReference type="GO" id="GO:0005737">
    <property type="term" value="C:cytoplasm"/>
    <property type="evidence" value="ECO:0007669"/>
    <property type="project" value="UniProtKB-SubCell"/>
</dbReference>
<dbReference type="GO" id="GO:0004045">
    <property type="term" value="F:peptidyl-tRNA hydrolase activity"/>
    <property type="evidence" value="ECO:0007669"/>
    <property type="project" value="UniProtKB-UniRule"/>
</dbReference>
<dbReference type="GO" id="GO:0000049">
    <property type="term" value="F:tRNA binding"/>
    <property type="evidence" value="ECO:0007669"/>
    <property type="project" value="UniProtKB-UniRule"/>
</dbReference>
<dbReference type="GO" id="GO:0006515">
    <property type="term" value="P:protein quality control for misfolded or incompletely synthesized proteins"/>
    <property type="evidence" value="ECO:0007669"/>
    <property type="project" value="UniProtKB-UniRule"/>
</dbReference>
<dbReference type="GO" id="GO:0072344">
    <property type="term" value="P:rescue of stalled ribosome"/>
    <property type="evidence" value="ECO:0007669"/>
    <property type="project" value="UniProtKB-UniRule"/>
</dbReference>
<dbReference type="CDD" id="cd00462">
    <property type="entry name" value="PTH"/>
    <property type="match status" value="1"/>
</dbReference>
<dbReference type="FunFam" id="3.40.50.1470:FF:000001">
    <property type="entry name" value="Peptidyl-tRNA hydrolase"/>
    <property type="match status" value="1"/>
</dbReference>
<dbReference type="Gene3D" id="3.40.50.1470">
    <property type="entry name" value="Peptidyl-tRNA hydrolase"/>
    <property type="match status" value="1"/>
</dbReference>
<dbReference type="HAMAP" id="MF_00083">
    <property type="entry name" value="Pept_tRNA_hydro_bact"/>
    <property type="match status" value="1"/>
</dbReference>
<dbReference type="InterPro" id="IPR001328">
    <property type="entry name" value="Pept_tRNA_hydro"/>
</dbReference>
<dbReference type="InterPro" id="IPR018171">
    <property type="entry name" value="Pept_tRNA_hydro_CS"/>
</dbReference>
<dbReference type="InterPro" id="IPR036416">
    <property type="entry name" value="Pept_tRNA_hydro_sf"/>
</dbReference>
<dbReference type="NCBIfam" id="TIGR00447">
    <property type="entry name" value="pth"/>
    <property type="match status" value="1"/>
</dbReference>
<dbReference type="PANTHER" id="PTHR17224">
    <property type="entry name" value="PEPTIDYL-TRNA HYDROLASE"/>
    <property type="match status" value="1"/>
</dbReference>
<dbReference type="PANTHER" id="PTHR17224:SF1">
    <property type="entry name" value="PEPTIDYL-TRNA HYDROLASE"/>
    <property type="match status" value="1"/>
</dbReference>
<dbReference type="Pfam" id="PF01195">
    <property type="entry name" value="Pept_tRNA_hydro"/>
    <property type="match status" value="1"/>
</dbReference>
<dbReference type="SUPFAM" id="SSF53178">
    <property type="entry name" value="Peptidyl-tRNA hydrolase-like"/>
    <property type="match status" value="1"/>
</dbReference>
<dbReference type="PROSITE" id="PS01195">
    <property type="entry name" value="PEPT_TRNA_HYDROL_1"/>
    <property type="match status" value="1"/>
</dbReference>
<dbReference type="PROSITE" id="PS01196">
    <property type="entry name" value="PEPT_TRNA_HYDROL_2"/>
    <property type="match status" value="1"/>
</dbReference>
<sequence>MGTEVKLLVGLGNPGPEYERTRHNAGFWLVDDFCRRHAITLSPDTKSKALIGRWQQGAHDLRIVLPQNFMNRSGFSVAALANFYKIPANEILVAYDELDLPPGVAKFKKGGGAGGHNGIKDIIAQTGSQDFMRLRIGIGHPGDKTKVTGFVLGKASANEQRLIDDCIDEASRSIDTLMAEGWGTALQRLHSYRPEQKG</sequence>
<evidence type="ECO:0000255" key="1">
    <source>
        <dbReference type="HAMAP-Rule" id="MF_00083"/>
    </source>
</evidence>
<keyword id="KW-0963">Cytoplasm</keyword>
<keyword id="KW-0378">Hydrolase</keyword>
<keyword id="KW-1185">Reference proteome</keyword>
<keyword id="KW-0694">RNA-binding</keyword>
<keyword id="KW-0820">tRNA-binding</keyword>
<gene>
    <name evidence="1" type="primary">pth</name>
    <name type="ordered locus">IL0931</name>
</gene>
<accession>Q5QV03</accession>
<comment type="function">
    <text evidence="1">Hydrolyzes ribosome-free peptidyl-tRNAs (with 1 or more amino acids incorporated), which drop off the ribosome during protein synthesis, or as a result of ribosome stalling.</text>
</comment>
<comment type="function">
    <text evidence="1">Catalyzes the release of premature peptidyl moieties from peptidyl-tRNA molecules trapped in stalled 50S ribosomal subunits, and thus maintains levels of free tRNAs and 50S ribosomes.</text>
</comment>
<comment type="catalytic activity">
    <reaction evidence="1">
        <text>an N-acyl-L-alpha-aminoacyl-tRNA + H2O = an N-acyl-L-amino acid + a tRNA + H(+)</text>
        <dbReference type="Rhea" id="RHEA:54448"/>
        <dbReference type="Rhea" id="RHEA-COMP:10123"/>
        <dbReference type="Rhea" id="RHEA-COMP:13883"/>
        <dbReference type="ChEBI" id="CHEBI:15377"/>
        <dbReference type="ChEBI" id="CHEBI:15378"/>
        <dbReference type="ChEBI" id="CHEBI:59874"/>
        <dbReference type="ChEBI" id="CHEBI:78442"/>
        <dbReference type="ChEBI" id="CHEBI:138191"/>
        <dbReference type="EC" id="3.1.1.29"/>
    </reaction>
</comment>
<comment type="subunit">
    <text evidence="1">Monomer.</text>
</comment>
<comment type="subcellular location">
    <subcellularLocation>
        <location evidence="1">Cytoplasm</location>
    </subcellularLocation>
</comment>
<comment type="similarity">
    <text evidence="1">Belongs to the PTH family.</text>
</comment>
<organism>
    <name type="scientific">Idiomarina loihiensis (strain ATCC BAA-735 / DSM 15497 / L2-TR)</name>
    <dbReference type="NCBI Taxonomy" id="283942"/>
    <lineage>
        <taxon>Bacteria</taxon>
        <taxon>Pseudomonadati</taxon>
        <taxon>Pseudomonadota</taxon>
        <taxon>Gammaproteobacteria</taxon>
        <taxon>Alteromonadales</taxon>
        <taxon>Idiomarinaceae</taxon>
        <taxon>Idiomarina</taxon>
    </lineage>
</organism>
<name>PTH_IDILO</name>
<feature type="chain" id="PRO_0000187751" description="Peptidyl-tRNA hydrolase">
    <location>
        <begin position="1"/>
        <end position="198"/>
    </location>
</feature>
<feature type="active site" description="Proton acceptor" evidence="1">
    <location>
        <position position="23"/>
    </location>
</feature>
<feature type="binding site" evidence="1">
    <location>
        <position position="18"/>
    </location>
    <ligand>
        <name>tRNA</name>
        <dbReference type="ChEBI" id="CHEBI:17843"/>
    </ligand>
</feature>
<feature type="binding site" evidence="1">
    <location>
        <position position="69"/>
    </location>
    <ligand>
        <name>tRNA</name>
        <dbReference type="ChEBI" id="CHEBI:17843"/>
    </ligand>
</feature>
<feature type="binding site" evidence="1">
    <location>
        <position position="71"/>
    </location>
    <ligand>
        <name>tRNA</name>
        <dbReference type="ChEBI" id="CHEBI:17843"/>
    </ligand>
</feature>
<feature type="binding site" evidence="1">
    <location>
        <position position="117"/>
    </location>
    <ligand>
        <name>tRNA</name>
        <dbReference type="ChEBI" id="CHEBI:17843"/>
    </ligand>
</feature>
<feature type="site" description="Discriminates between blocked and unblocked aminoacyl-tRNA" evidence="1">
    <location>
        <position position="13"/>
    </location>
</feature>
<feature type="site" description="Stabilizes the basic form of H active site to accept a proton" evidence="1">
    <location>
        <position position="96"/>
    </location>
</feature>
<reference key="1">
    <citation type="journal article" date="2004" name="Proc. Natl. Acad. Sci. U.S.A.">
        <title>Genome sequence of the deep-sea gamma-proteobacterium Idiomarina loihiensis reveals amino acid fermentation as a source of carbon and energy.</title>
        <authorList>
            <person name="Hou S."/>
            <person name="Saw J.H."/>
            <person name="Lee K.S."/>
            <person name="Freitas T.A."/>
            <person name="Belisle C."/>
            <person name="Kawarabayasi Y."/>
            <person name="Donachie S.P."/>
            <person name="Pikina A."/>
            <person name="Galperin M.Y."/>
            <person name="Koonin E.V."/>
            <person name="Makarova K.S."/>
            <person name="Omelchenko M.V."/>
            <person name="Sorokin A."/>
            <person name="Wolf Y.I."/>
            <person name="Li Q.X."/>
            <person name="Keum Y.S."/>
            <person name="Campbell S."/>
            <person name="Denery J."/>
            <person name="Aizawa S."/>
            <person name="Shibata S."/>
            <person name="Malahoff A."/>
            <person name="Alam M."/>
        </authorList>
    </citation>
    <scope>NUCLEOTIDE SEQUENCE [LARGE SCALE GENOMIC DNA]</scope>
    <source>
        <strain>ATCC BAA-735 / DSM 15497 / L2-TR</strain>
    </source>
</reference>